<protein>
    <recommendedName>
        <fullName evidence="1">Ribosomal RNA small subunit methyltransferase C</fullName>
        <ecNumber evidence="1">2.1.1.172</ecNumber>
    </recommendedName>
    <alternativeName>
        <fullName evidence="1">16S rRNA m2G1207 methyltransferase</fullName>
    </alternativeName>
    <alternativeName>
        <fullName evidence="1">rRNA (guanine-N(2)-)-methyltransferase RsmC</fullName>
    </alternativeName>
</protein>
<keyword id="KW-0963">Cytoplasm</keyword>
<keyword id="KW-0489">Methyltransferase</keyword>
<keyword id="KW-0698">rRNA processing</keyword>
<keyword id="KW-0949">S-adenosyl-L-methionine</keyword>
<keyword id="KW-0808">Transferase</keyword>
<evidence type="ECO:0000255" key="1">
    <source>
        <dbReference type="HAMAP-Rule" id="MF_01862"/>
    </source>
</evidence>
<sequence length="343" mass="37639">MSAFTPASEVLLRHSDDFEQSRILFAGDLQDDLPARLDTAASRAHTQQFHHWQVLSRQMGDNARFSLVATANDVADCDTLIYYWPKNKPEAQFQLMNLLSLLPVGTDIFVVGENRSGVRSAEQMLADYAPLNKVDSARRCGLYFGRLEKQPVFDANKFWGEYSVDGLTVKTLPGVFSRDGLDVGSQLLLSTLTPHTKGKVLDVGCGAGVLSVAFARHSPKIRLTLCDVSAPAVEASRATLAANSVEGEVFASNVFSEVKGRFDMIISNPPFHDGMQTSLDAAQTLIRGAVRHLNSGGELRIVANAFLPYPDVLDETFGFHEVIAQTGRFKVYRAIMTRQAKKG</sequence>
<reference key="1">
    <citation type="journal article" date="2009" name="PLoS Genet.">
        <title>Organised genome dynamics in the Escherichia coli species results in highly diverse adaptive paths.</title>
        <authorList>
            <person name="Touchon M."/>
            <person name="Hoede C."/>
            <person name="Tenaillon O."/>
            <person name="Barbe V."/>
            <person name="Baeriswyl S."/>
            <person name="Bidet P."/>
            <person name="Bingen E."/>
            <person name="Bonacorsi S."/>
            <person name="Bouchier C."/>
            <person name="Bouvet O."/>
            <person name="Calteau A."/>
            <person name="Chiapello H."/>
            <person name="Clermont O."/>
            <person name="Cruveiller S."/>
            <person name="Danchin A."/>
            <person name="Diard M."/>
            <person name="Dossat C."/>
            <person name="Karoui M.E."/>
            <person name="Frapy E."/>
            <person name="Garry L."/>
            <person name="Ghigo J.M."/>
            <person name="Gilles A.M."/>
            <person name="Johnson J."/>
            <person name="Le Bouguenec C."/>
            <person name="Lescat M."/>
            <person name="Mangenot S."/>
            <person name="Martinez-Jehanne V."/>
            <person name="Matic I."/>
            <person name="Nassif X."/>
            <person name="Oztas S."/>
            <person name="Petit M.A."/>
            <person name="Pichon C."/>
            <person name="Rouy Z."/>
            <person name="Ruf C.S."/>
            <person name="Schneider D."/>
            <person name="Tourret J."/>
            <person name="Vacherie B."/>
            <person name="Vallenet D."/>
            <person name="Medigue C."/>
            <person name="Rocha E.P.C."/>
            <person name="Denamur E."/>
        </authorList>
    </citation>
    <scope>NUCLEOTIDE SEQUENCE [LARGE SCALE GENOMIC DNA]</scope>
    <source>
        <strain>IAI39 / ExPEC</strain>
    </source>
</reference>
<comment type="function">
    <text evidence="1">Specifically methylates the guanine in position 1207 of 16S rRNA in the 30S particle.</text>
</comment>
<comment type="catalytic activity">
    <reaction evidence="1">
        <text>guanosine(1207) in 16S rRNA + S-adenosyl-L-methionine = N(2)-methylguanosine(1207) in 16S rRNA + S-adenosyl-L-homocysteine + H(+)</text>
        <dbReference type="Rhea" id="RHEA:42736"/>
        <dbReference type="Rhea" id="RHEA-COMP:10213"/>
        <dbReference type="Rhea" id="RHEA-COMP:10214"/>
        <dbReference type="ChEBI" id="CHEBI:15378"/>
        <dbReference type="ChEBI" id="CHEBI:57856"/>
        <dbReference type="ChEBI" id="CHEBI:59789"/>
        <dbReference type="ChEBI" id="CHEBI:74269"/>
        <dbReference type="ChEBI" id="CHEBI:74481"/>
        <dbReference type="EC" id="2.1.1.172"/>
    </reaction>
</comment>
<comment type="subunit">
    <text evidence="1">Monomer.</text>
</comment>
<comment type="subcellular location">
    <subcellularLocation>
        <location evidence="1">Cytoplasm</location>
    </subcellularLocation>
</comment>
<comment type="similarity">
    <text evidence="1">Belongs to the methyltransferase superfamily. RsmC family.</text>
</comment>
<organism>
    <name type="scientific">Escherichia coli O7:K1 (strain IAI39 / ExPEC)</name>
    <dbReference type="NCBI Taxonomy" id="585057"/>
    <lineage>
        <taxon>Bacteria</taxon>
        <taxon>Pseudomonadati</taxon>
        <taxon>Pseudomonadota</taxon>
        <taxon>Gammaproteobacteria</taxon>
        <taxon>Enterobacterales</taxon>
        <taxon>Enterobacteriaceae</taxon>
        <taxon>Escherichia</taxon>
    </lineage>
</organism>
<gene>
    <name evidence="1" type="primary">rsmC</name>
    <name type="ordered locus">ECIAI39_4842</name>
</gene>
<feature type="chain" id="PRO_0000369712" description="Ribosomal RNA small subunit methyltransferase C">
    <location>
        <begin position="1"/>
        <end position="343"/>
    </location>
</feature>
<dbReference type="EC" id="2.1.1.172" evidence="1"/>
<dbReference type="EMBL" id="CU928164">
    <property type="protein sequence ID" value="CAR20939.1"/>
    <property type="molecule type" value="Genomic_DNA"/>
</dbReference>
<dbReference type="RefSeq" id="WP_001272341.1">
    <property type="nucleotide sequence ID" value="NC_011750.1"/>
</dbReference>
<dbReference type="RefSeq" id="YP_002410692.1">
    <property type="nucleotide sequence ID" value="NC_011750.1"/>
</dbReference>
<dbReference type="SMR" id="B7NVD9"/>
<dbReference type="STRING" id="585057.ECIAI39_4842"/>
<dbReference type="KEGG" id="ect:ECIAI39_4842"/>
<dbReference type="PATRIC" id="fig|585057.6.peg.5002"/>
<dbReference type="HOGENOM" id="CLU_049581_0_1_6"/>
<dbReference type="Proteomes" id="UP000000749">
    <property type="component" value="Chromosome"/>
</dbReference>
<dbReference type="GO" id="GO:0005737">
    <property type="term" value="C:cytoplasm"/>
    <property type="evidence" value="ECO:0007669"/>
    <property type="project" value="UniProtKB-SubCell"/>
</dbReference>
<dbReference type="GO" id="GO:0052914">
    <property type="term" value="F:16S rRNA (guanine(1207)-N(2))-methyltransferase activity"/>
    <property type="evidence" value="ECO:0007669"/>
    <property type="project" value="UniProtKB-EC"/>
</dbReference>
<dbReference type="GO" id="GO:0003676">
    <property type="term" value="F:nucleic acid binding"/>
    <property type="evidence" value="ECO:0007669"/>
    <property type="project" value="InterPro"/>
</dbReference>
<dbReference type="CDD" id="cd02440">
    <property type="entry name" value="AdoMet_MTases"/>
    <property type="match status" value="1"/>
</dbReference>
<dbReference type="FunFam" id="3.40.50.150:FF:000058">
    <property type="entry name" value="Ribosomal RNA small subunit methyltransferase C"/>
    <property type="match status" value="1"/>
</dbReference>
<dbReference type="FunFam" id="3.40.50.150:FF:000063">
    <property type="entry name" value="Ribosomal RNA small subunit methyltransferase C"/>
    <property type="match status" value="1"/>
</dbReference>
<dbReference type="Gene3D" id="3.40.50.150">
    <property type="entry name" value="Vaccinia Virus protein VP39"/>
    <property type="match status" value="2"/>
</dbReference>
<dbReference type="HAMAP" id="MF_01862">
    <property type="entry name" value="16SrRNA_methyltr_C"/>
    <property type="match status" value="1"/>
</dbReference>
<dbReference type="InterPro" id="IPR002052">
    <property type="entry name" value="DNA_methylase_N6_adenine_CS"/>
</dbReference>
<dbReference type="InterPro" id="IPR013675">
    <property type="entry name" value="Mtase_sm_N"/>
</dbReference>
<dbReference type="InterPro" id="IPR023543">
    <property type="entry name" value="rRNA_ssu_MeTfrase_C"/>
</dbReference>
<dbReference type="InterPro" id="IPR046977">
    <property type="entry name" value="RsmC/RlmG"/>
</dbReference>
<dbReference type="InterPro" id="IPR029063">
    <property type="entry name" value="SAM-dependent_MTases_sf"/>
</dbReference>
<dbReference type="InterPro" id="IPR007848">
    <property type="entry name" value="Small_mtfrase_dom"/>
</dbReference>
<dbReference type="NCBIfam" id="NF007023">
    <property type="entry name" value="PRK09489.1"/>
    <property type="match status" value="1"/>
</dbReference>
<dbReference type="PANTHER" id="PTHR47816">
    <property type="entry name" value="RIBOSOMAL RNA SMALL SUBUNIT METHYLTRANSFERASE C"/>
    <property type="match status" value="1"/>
</dbReference>
<dbReference type="PANTHER" id="PTHR47816:SF4">
    <property type="entry name" value="RIBOSOMAL RNA SMALL SUBUNIT METHYLTRANSFERASE C"/>
    <property type="match status" value="1"/>
</dbReference>
<dbReference type="Pfam" id="PF05175">
    <property type="entry name" value="MTS"/>
    <property type="match status" value="1"/>
</dbReference>
<dbReference type="Pfam" id="PF08468">
    <property type="entry name" value="MTS_N"/>
    <property type="match status" value="1"/>
</dbReference>
<dbReference type="SUPFAM" id="SSF53335">
    <property type="entry name" value="S-adenosyl-L-methionine-dependent methyltransferases"/>
    <property type="match status" value="1"/>
</dbReference>
<accession>B7NVD9</accession>
<proteinExistence type="inferred from homology"/>
<name>RSMC_ECO7I</name>